<proteinExistence type="evidence at protein level"/>
<gene>
    <name evidence="3" type="primary">wecC</name>
    <name evidence="6" type="synonym">rffD</name>
    <name type="ordered locus">b3787</name>
    <name type="ordered locus">JW5599</name>
</gene>
<feature type="chain" id="PRO_0000074077" description="UDP-N-acetyl-D-mannosamine dehydrogenase">
    <location>
        <begin position="1"/>
        <end position="420"/>
    </location>
</feature>
<feature type="active site" description="Proton donor/acceptor" evidence="1 3">
    <location>
        <position position="212"/>
    </location>
</feature>
<feature type="active site" description="Nucleophile" evidence="1 3">
    <location>
        <position position="266"/>
    </location>
</feature>
<feature type="binding site" description="in chain A" evidence="2 3">
    <location>
        <position position="13"/>
    </location>
    <ligand>
        <name>NAD(+)</name>
        <dbReference type="ChEBI" id="CHEBI:57540"/>
        <note>ligand shared between homodimeric partners</note>
    </ligand>
</feature>
<feature type="binding site" description="in chain A" evidence="2 3">
    <location>
        <position position="14"/>
    </location>
    <ligand>
        <name>NAD(+)</name>
        <dbReference type="ChEBI" id="CHEBI:57540"/>
        <note>ligand shared between homodimeric partners</note>
    </ligand>
</feature>
<feature type="binding site" description="in chain A" evidence="2 3">
    <location>
        <position position="33"/>
    </location>
    <ligand>
        <name>NAD(+)</name>
        <dbReference type="ChEBI" id="CHEBI:57540"/>
        <note>ligand shared between homodimeric partners</note>
    </ligand>
</feature>
<feature type="binding site" description="in chain A" evidence="2 3">
    <location>
        <position position="85"/>
    </location>
    <ligand>
        <name>NAD(+)</name>
        <dbReference type="ChEBI" id="CHEBI:57540"/>
        <note>ligand shared between homodimeric partners</note>
    </ligand>
</feature>
<feature type="binding site" description="in chain A" evidence="2 3">
    <location>
        <position position="126"/>
    </location>
    <ligand>
        <name>NAD(+)</name>
        <dbReference type="ChEBI" id="CHEBI:57540"/>
        <note>ligand shared between homodimeric partners</note>
    </ligand>
</feature>
<feature type="binding site" description="in chain A" evidence="1 3">
    <location>
        <position position="160"/>
    </location>
    <ligand>
        <name>UDP-N-acetyl-alpha-D-mannosaminouronate</name>
        <dbReference type="ChEBI" id="CHEBI:70731"/>
        <note>ligand shared between homodimeric partners</note>
    </ligand>
</feature>
<feature type="binding site" description="in chain A" evidence="1 3">
    <location>
        <position position="161"/>
    </location>
    <ligand>
        <name>UDP-N-acetyl-alpha-D-mannosaminouronate</name>
        <dbReference type="ChEBI" id="CHEBI:70731"/>
        <note>ligand shared between homodimeric partners</note>
    </ligand>
</feature>
<feature type="binding site" description="in chain A" evidence="1 3">
    <location>
        <position position="212"/>
    </location>
    <ligand>
        <name>UDP-N-acetyl-alpha-D-mannosaminouronate</name>
        <dbReference type="ChEBI" id="CHEBI:70731"/>
        <note>ligand shared between homodimeric partners</note>
    </ligand>
</feature>
<feature type="binding site" description="in chain A" evidence="1 3">
    <location>
        <position position="216"/>
    </location>
    <ligand>
        <name>UDP-N-acetyl-alpha-D-mannosaminouronate</name>
        <dbReference type="ChEBI" id="CHEBI:70731"/>
        <note>ligand shared between homodimeric partners</note>
    </ligand>
</feature>
<feature type="binding site" description="in chain A" evidence="1 3">
    <location>
        <position position="219"/>
    </location>
    <ligand>
        <name>UDP-N-acetyl-alpha-D-mannosaminouronate</name>
        <dbReference type="ChEBI" id="CHEBI:70731"/>
        <note>ligand shared between homodimeric partners</note>
    </ligand>
</feature>
<feature type="binding site" description="in chain B" evidence="1 3">
    <location>
        <position position="250"/>
    </location>
    <ligand>
        <name>UDP-N-acetyl-alpha-D-mannosaminouronate</name>
        <dbReference type="ChEBI" id="CHEBI:70731"/>
        <note>ligand shared between homodimeric partners</note>
    </ligand>
</feature>
<feature type="binding site" description="in chain B" evidence="1 3">
    <location>
        <position position="252"/>
    </location>
    <ligand>
        <name>UDP-N-acetyl-alpha-D-mannosaminouronate</name>
        <dbReference type="ChEBI" id="CHEBI:70731"/>
        <note>ligand shared between homodimeric partners</note>
    </ligand>
</feature>
<feature type="binding site" description="in chain A" evidence="1 3">
    <location>
        <position position="263"/>
    </location>
    <ligand>
        <name>UDP-N-acetyl-alpha-D-mannosaminouronate</name>
        <dbReference type="ChEBI" id="CHEBI:70731"/>
        <note>ligand shared between homodimeric partners</note>
    </ligand>
</feature>
<feature type="binding site" description="in chain A" evidence="1 3">
    <location>
        <position position="330"/>
    </location>
    <ligand>
        <name>UDP-N-acetyl-alpha-D-mannosaminouronate</name>
        <dbReference type="ChEBI" id="CHEBI:70731"/>
        <note>ligand shared between homodimeric partners</note>
    </ligand>
</feature>
<feature type="binding site" description="in chain A" evidence="1 3">
    <location>
        <position position="331"/>
    </location>
    <ligand>
        <name>UDP-N-acetyl-alpha-D-mannosaminouronate</name>
        <dbReference type="ChEBI" id="CHEBI:70731"/>
        <note>ligand shared between homodimeric partners</note>
    </ligand>
</feature>
<feature type="binding site" description="in chain B" evidence="2 3">
    <location>
        <position position="338"/>
    </location>
    <ligand>
        <name>NAD(+)</name>
        <dbReference type="ChEBI" id="CHEBI:57540"/>
        <note>ligand shared between homodimeric partners</note>
    </ligand>
</feature>
<feature type="binding site" description="in chain A" evidence="1 3">
    <location>
        <position position="416"/>
    </location>
    <ligand>
        <name>UDP-N-acetyl-alpha-D-mannosaminouronate</name>
        <dbReference type="ChEBI" id="CHEBI:70731"/>
        <note>ligand shared between homodimeric partners</note>
    </ligand>
</feature>
<feature type="sequence conflict" description="In Ref. 2; AAA67587." evidence="8" ref="2">
    <original>A</original>
    <variation>R</variation>
    <location>
        <position position="78"/>
    </location>
</feature>
<sequence>MSFATISVIGLGYIGLPTAAAFASRQKQVIGVDINQHAVDTINRGEIHIVEPDLASVVKTAVEGGFLRASTTPVEADAWLIAVPTPFKGDHEPDMTYVESAARSIAPVLKKGALVILESTSPVGSTEKMAEWLAEMRPDLTFPQQVGEQADVNIAYCPERVLPGQVMVELIKNDRVIGGMTPVCSARASELYKIFLEGECVVTNSRTAEMCKLTENSFRDVNIAFANELSLICADQGINVWELIRLANRHPRVNILQPGPGVGGHCIAVDPWFIVAQNPQQARLIRTAREVNDHKPFWVIDQVKAAVADCLAATDKRASELKIACFGLAFKPNIDDLRESPAMEIAELIAQWHSGETLVVEPNIHQLPKKLTGLCTLAQLDEALATADVLVMLVDHSQFKVINGDNVHQQYVVDAKGVWR</sequence>
<evidence type="ECO:0000250" key="1">
    <source>
        <dbReference type="UniProtKB" id="O59284"/>
    </source>
</evidence>
<evidence type="ECO:0000250" key="2">
    <source>
        <dbReference type="UniProtKB" id="P11759"/>
    </source>
</evidence>
<evidence type="ECO:0000255" key="3">
    <source>
        <dbReference type="HAMAP-Rule" id="MF_02029"/>
    </source>
</evidence>
<evidence type="ECO:0000269" key="4">
    <source>
    </source>
</evidence>
<evidence type="ECO:0000269" key="5">
    <source>
    </source>
</evidence>
<evidence type="ECO:0000303" key="6">
    <source>
    </source>
</evidence>
<evidence type="ECO:0000303" key="7">
    <source>
    </source>
</evidence>
<evidence type="ECO:0000305" key="8"/>
<organism>
    <name type="scientific">Escherichia coli (strain K12)</name>
    <dbReference type="NCBI Taxonomy" id="83333"/>
    <lineage>
        <taxon>Bacteria</taxon>
        <taxon>Pseudomonadati</taxon>
        <taxon>Pseudomonadota</taxon>
        <taxon>Gammaproteobacteria</taxon>
        <taxon>Enterobacterales</taxon>
        <taxon>Enterobacteriaceae</taxon>
        <taxon>Escherichia</taxon>
    </lineage>
</organism>
<accession>P27829</accession>
<accession>Q2M895</accession>
<protein>
    <recommendedName>
        <fullName evidence="3 7">UDP-N-acetyl-D-mannosamine dehydrogenase</fullName>
        <ecNumber evidence="3 5">1.1.1.336</ecNumber>
    </recommendedName>
    <alternativeName>
        <fullName evidence="3 8">UDP-ManNAc 6-dehydrogenase</fullName>
    </alternativeName>
</protein>
<comment type="function">
    <text evidence="3 5">Catalyzes the four-electron oxidation of UDP-N-acetyl-D-mannosamine (UDP-ManNAc), reducing NAD(+) and releasing UDP-N-acetylmannosaminuronic acid (UDP-ManNAcA).</text>
</comment>
<comment type="catalytic activity">
    <reaction evidence="3 5">
        <text>UDP-N-acetyl-alpha-D-mannosamine + 2 NAD(+) + H2O = UDP-N-acetyl-alpha-D-mannosaminouronate + 2 NADH + 3 H(+)</text>
        <dbReference type="Rhea" id="RHEA:25780"/>
        <dbReference type="ChEBI" id="CHEBI:15377"/>
        <dbReference type="ChEBI" id="CHEBI:15378"/>
        <dbReference type="ChEBI" id="CHEBI:57540"/>
        <dbReference type="ChEBI" id="CHEBI:57945"/>
        <dbReference type="ChEBI" id="CHEBI:68623"/>
        <dbReference type="ChEBI" id="CHEBI:70731"/>
        <dbReference type="EC" id="1.1.1.336"/>
    </reaction>
</comment>
<comment type="activity regulation">
    <text evidence="5">Activated by N-acetylglucosamine-1-P or K(+) at low UDP-ManNAc concentrations.</text>
</comment>
<comment type="biophysicochemical properties">
    <kinetics>
        <KM evidence="5">0.22 mM for UDP-ManNAc (in the presence of 1 mM N-acetylglucosamine-1-P)</KM>
        <KM evidence="5">0.11 mM for UDP-ManNAc (in the presence of 150 mM KCl)</KM>
        <KM evidence="5">0.38 mM for UDP-ManNAc (in the absence of activators)</KM>
        <KM evidence="5">0.21 mM for NAD(+)</KM>
    </kinetics>
    <phDependence>
        <text evidence="5">Optimum pH is 10.0.</text>
    </phDependence>
</comment>
<comment type="pathway">
    <text evidence="3 4">Bacterial outer membrane biogenesis; enterobacterial common antigen biosynthesis.</text>
</comment>
<comment type="subunit">
    <text evidence="5">Homodimer.</text>
</comment>
<comment type="disruption phenotype">
    <text evidence="4">Mutants do not synthesize Und-PP-GlcNAc-ManNAcA (lipid II) and enterobacterial common antigen (ECA).</text>
</comment>
<comment type="similarity">
    <text evidence="3 8">Belongs to the UDP-glucose/GDP-mannose dehydrogenase family. WecC subfamily.</text>
</comment>
<comment type="sequence caution" evidence="8">
    <conflict type="frameshift">
        <sequence resource="EMBL-CDS" id="AAA67587"/>
    </conflict>
</comment>
<keyword id="KW-0520">NAD</keyword>
<keyword id="KW-0560">Oxidoreductase</keyword>
<keyword id="KW-1185">Reference proteome</keyword>
<reference key="1">
    <citation type="journal article" date="1993" name="J. Bacteriol.">
        <title>A cytoplasmic protein, NfrC, is required for bacteriophage N4 adsorption.</title>
        <authorList>
            <person name="Kiino D.R."/>
            <person name="Licudine R."/>
            <person name="Wilt K."/>
            <person name="Yang D.H.C."/>
            <person name="Rothman-Denes L.B."/>
        </authorList>
    </citation>
    <scope>NUCLEOTIDE SEQUENCE [GENOMIC DNA]</scope>
    <source>
        <strain>K12 / MC4100 / ATCC 35695 / DSM 6574</strain>
    </source>
</reference>
<reference key="2">
    <citation type="journal article" date="1992" name="Science">
        <title>Analysis of the Escherichia coli genome: DNA sequence of the region from 84.5 to 86.5 minutes.</title>
        <authorList>
            <person name="Daniels D.L."/>
            <person name="Plunkett G. III"/>
            <person name="Burland V.D."/>
            <person name="Blattner F.R."/>
        </authorList>
    </citation>
    <scope>NUCLEOTIDE SEQUENCE [LARGE SCALE GENOMIC DNA]</scope>
    <source>
        <strain>K12 / MG1655 / ATCC 47076</strain>
    </source>
</reference>
<reference key="3">
    <citation type="journal article" date="1997" name="Science">
        <title>The complete genome sequence of Escherichia coli K-12.</title>
        <authorList>
            <person name="Blattner F.R."/>
            <person name="Plunkett G. III"/>
            <person name="Bloch C.A."/>
            <person name="Perna N.T."/>
            <person name="Burland V."/>
            <person name="Riley M."/>
            <person name="Collado-Vides J."/>
            <person name="Glasner J.D."/>
            <person name="Rode C.K."/>
            <person name="Mayhew G.F."/>
            <person name="Gregor J."/>
            <person name="Davis N.W."/>
            <person name="Kirkpatrick H.A."/>
            <person name="Goeden M.A."/>
            <person name="Rose D.J."/>
            <person name="Mau B."/>
            <person name="Shao Y."/>
        </authorList>
    </citation>
    <scope>NUCLEOTIDE SEQUENCE [LARGE SCALE GENOMIC DNA]</scope>
    <scope>SEQUENCE REVISION</scope>
    <source>
        <strain>K12 / MG1655 / ATCC 47076</strain>
    </source>
</reference>
<reference key="4">
    <citation type="journal article" date="2006" name="Nucleic Acids Res.">
        <title>Escherichia coli K-12: a cooperatively developed annotation snapshot -- 2005.</title>
        <authorList>
            <person name="Riley M."/>
            <person name="Abe T."/>
            <person name="Arnaud M.B."/>
            <person name="Berlyn M.K.B."/>
            <person name="Blattner F.R."/>
            <person name="Chaudhuri R.R."/>
            <person name="Glasner J.D."/>
            <person name="Horiuchi T."/>
            <person name="Keseler I.M."/>
            <person name="Kosuge T."/>
            <person name="Mori H."/>
            <person name="Perna N.T."/>
            <person name="Plunkett G. III"/>
            <person name="Rudd K.E."/>
            <person name="Serres M.H."/>
            <person name="Thomas G.H."/>
            <person name="Thomson N.R."/>
            <person name="Wishart D."/>
            <person name="Wanner B.L."/>
        </authorList>
    </citation>
    <scope>SEQUENCE REVISION TO 78</scope>
</reference>
<reference key="5">
    <citation type="journal article" date="2006" name="Mol. Syst. Biol.">
        <title>Highly accurate genome sequences of Escherichia coli K-12 strains MG1655 and W3110.</title>
        <authorList>
            <person name="Hayashi K."/>
            <person name="Morooka N."/>
            <person name="Yamamoto Y."/>
            <person name="Fujita K."/>
            <person name="Isono K."/>
            <person name="Choi S."/>
            <person name="Ohtsubo E."/>
            <person name="Baba T."/>
            <person name="Wanner B.L."/>
            <person name="Mori H."/>
            <person name="Horiuchi T."/>
        </authorList>
    </citation>
    <scope>NUCLEOTIDE SEQUENCE [LARGE SCALE GENOMIC DNA]</scope>
    <source>
        <strain>K12 / W3110 / ATCC 27325 / DSM 5911</strain>
    </source>
</reference>
<reference key="6">
    <citation type="journal article" date="1979" name="J. Biol. Chem.">
        <title>Enzymatic synthesis of uridine diphosphate N-acetyl-D-mannosaminuronic acid.</title>
        <authorList>
            <person name="Kawamura T."/>
            <person name="Ishimoto N."/>
            <person name="Ito E."/>
        </authorList>
    </citation>
    <scope>FUNCTION</scope>
    <scope>CATALYTIC ACTIVITY</scope>
    <scope>ACTIVITY REGULATION</scope>
    <scope>BIOPHYSICOCHEMICAL PROPERTIES</scope>
    <scope>SUBUNIT</scope>
    <source>
        <strain>014:K7:H-</strain>
    </source>
</reference>
<reference key="7">
    <citation type="journal article" date="1990" name="J. Biol. Chem.">
        <title>Biosynthesis of enterobacterial common antigen in Escherichia coli. Biochemical characterization of Tn10 insertion mutants defective in enterobacterial common antigen synthesis.</title>
        <authorList>
            <person name="Meier-Dieter U."/>
            <person name="Starman R."/>
            <person name="Barr K."/>
            <person name="Mayer H."/>
            <person name="Rick P.D."/>
        </authorList>
    </citation>
    <scope>PATHWAY</scope>
    <scope>DISRUPTION PHENOTYPE</scope>
</reference>
<name>WECC_ECOLI</name>
<dbReference type="EC" id="1.1.1.336" evidence="3 5"/>
<dbReference type="EMBL" id="L18799">
    <property type="status" value="NOT_ANNOTATED_CDS"/>
    <property type="molecule type" value="Unassigned_DNA"/>
</dbReference>
<dbReference type="EMBL" id="M87049">
    <property type="protein sequence ID" value="AAA67587.1"/>
    <property type="status" value="ALT_FRAME"/>
    <property type="molecule type" value="Genomic_DNA"/>
</dbReference>
<dbReference type="EMBL" id="U00096">
    <property type="protein sequence ID" value="AAT48212.1"/>
    <property type="molecule type" value="Genomic_DNA"/>
</dbReference>
<dbReference type="EMBL" id="AP009048">
    <property type="protein sequence ID" value="BAE77511.1"/>
    <property type="molecule type" value="Genomic_DNA"/>
</dbReference>
<dbReference type="PIR" id="F65182">
    <property type="entry name" value="F65182"/>
</dbReference>
<dbReference type="RefSeq" id="WP_000006621.1">
    <property type="nucleotide sequence ID" value="NZ_STEB01000021.1"/>
</dbReference>
<dbReference type="RefSeq" id="YP_026254.1">
    <property type="nucleotide sequence ID" value="NC_000913.3"/>
</dbReference>
<dbReference type="SMR" id="P27829"/>
<dbReference type="BioGRID" id="4262604">
    <property type="interactions" value="236"/>
</dbReference>
<dbReference type="FunCoup" id="P27829">
    <property type="interactions" value="733"/>
</dbReference>
<dbReference type="STRING" id="511145.b3787"/>
<dbReference type="jPOST" id="P27829"/>
<dbReference type="PaxDb" id="511145-b3787"/>
<dbReference type="EnsemblBacteria" id="AAT48212">
    <property type="protein sequence ID" value="AAT48212"/>
    <property type="gene ID" value="b3787"/>
</dbReference>
<dbReference type="GeneID" id="75174019"/>
<dbReference type="GeneID" id="948977"/>
<dbReference type="KEGG" id="ecj:JW5599"/>
<dbReference type="KEGG" id="eco:b3787"/>
<dbReference type="KEGG" id="ecoc:C3026_20505"/>
<dbReference type="PATRIC" id="fig|1411691.4.peg.2919"/>
<dbReference type="EchoBASE" id="EB1421"/>
<dbReference type="eggNOG" id="COG0677">
    <property type="taxonomic scope" value="Bacteria"/>
</dbReference>
<dbReference type="HOGENOM" id="CLU_023810_3_2_6"/>
<dbReference type="InParanoid" id="P27829"/>
<dbReference type="OMA" id="IDPWFIV"/>
<dbReference type="OrthoDB" id="9803238at2"/>
<dbReference type="PhylomeDB" id="P27829"/>
<dbReference type="BioCyc" id="EcoCyc:UDPMANNACADEHYDROG-MONOMER"/>
<dbReference type="BioCyc" id="MetaCyc:UDPMANNACADEHYDROG-MONOMER"/>
<dbReference type="SABIO-RK" id="P27829"/>
<dbReference type="UniPathway" id="UPA00566"/>
<dbReference type="PRO" id="PR:P27829"/>
<dbReference type="Proteomes" id="UP000000625">
    <property type="component" value="Chromosome"/>
</dbReference>
<dbReference type="GO" id="GO:0005829">
    <property type="term" value="C:cytosol"/>
    <property type="evidence" value="ECO:0000314"/>
    <property type="project" value="EcoCyc"/>
</dbReference>
<dbReference type="GO" id="GO:0051287">
    <property type="term" value="F:NAD binding"/>
    <property type="evidence" value="ECO:0007669"/>
    <property type="project" value="InterPro"/>
</dbReference>
<dbReference type="GO" id="GO:0016628">
    <property type="term" value="F:oxidoreductase activity, acting on the CH-CH group of donors, NAD or NADP as acceptor"/>
    <property type="evidence" value="ECO:0007669"/>
    <property type="project" value="InterPro"/>
</dbReference>
<dbReference type="GO" id="GO:0042803">
    <property type="term" value="F:protein homodimerization activity"/>
    <property type="evidence" value="ECO:0000314"/>
    <property type="project" value="EcoCyc"/>
</dbReference>
<dbReference type="GO" id="GO:0089714">
    <property type="term" value="F:UDP-N-acetyl-D-mannosamine dehydrogenase activity"/>
    <property type="evidence" value="ECO:0000314"/>
    <property type="project" value="EcoCyc"/>
</dbReference>
<dbReference type="GO" id="GO:0009246">
    <property type="term" value="P:enterobacterial common antigen biosynthetic process"/>
    <property type="evidence" value="ECO:0000315"/>
    <property type="project" value="EcoCyc"/>
</dbReference>
<dbReference type="FunFam" id="3.40.50.720:FF:000139">
    <property type="entry name" value="UDP-N-acetyl-D-mannosamine dehydrogenase"/>
    <property type="match status" value="1"/>
</dbReference>
<dbReference type="FunFam" id="3.40.50.720:FF:000235">
    <property type="entry name" value="UDP-N-acetyl-D-mannosamine dehydrogenase"/>
    <property type="match status" value="1"/>
</dbReference>
<dbReference type="Gene3D" id="1.20.5.100">
    <property type="entry name" value="Cytochrome c1, transmembrane anchor, C-terminal"/>
    <property type="match status" value="1"/>
</dbReference>
<dbReference type="Gene3D" id="3.40.50.720">
    <property type="entry name" value="NAD(P)-binding Rossmann-like Domain"/>
    <property type="match status" value="2"/>
</dbReference>
<dbReference type="HAMAP" id="MF_02029">
    <property type="entry name" value="WecC_RffD"/>
    <property type="match status" value="1"/>
</dbReference>
<dbReference type="InterPro" id="IPR008927">
    <property type="entry name" value="6-PGluconate_DH-like_C_sf"/>
</dbReference>
<dbReference type="InterPro" id="IPR036291">
    <property type="entry name" value="NAD(P)-bd_dom_sf"/>
</dbReference>
<dbReference type="InterPro" id="IPR017476">
    <property type="entry name" value="UDP-Glc/GDP-Man"/>
</dbReference>
<dbReference type="InterPro" id="IPR014027">
    <property type="entry name" value="UDP-Glc/GDP-Man_DH_C"/>
</dbReference>
<dbReference type="InterPro" id="IPR036220">
    <property type="entry name" value="UDP-Glc/GDP-Man_DH_C_sf"/>
</dbReference>
<dbReference type="InterPro" id="IPR014026">
    <property type="entry name" value="UDP-Glc/GDP-Man_DH_dimer"/>
</dbReference>
<dbReference type="InterPro" id="IPR001732">
    <property type="entry name" value="UDP-Glc/GDP-Man_DH_N"/>
</dbReference>
<dbReference type="InterPro" id="IPR028359">
    <property type="entry name" value="UDP_ManNAc/GlcNAc_DH"/>
</dbReference>
<dbReference type="InterPro" id="IPR032891">
    <property type="entry name" value="WecC"/>
</dbReference>
<dbReference type="NCBIfam" id="TIGR03026">
    <property type="entry name" value="NDP-sugDHase"/>
    <property type="match status" value="1"/>
</dbReference>
<dbReference type="NCBIfam" id="NF008286">
    <property type="entry name" value="PRK11064.1"/>
    <property type="match status" value="1"/>
</dbReference>
<dbReference type="PANTHER" id="PTHR43491">
    <property type="entry name" value="UDP-N-ACETYL-D-MANNOSAMINE DEHYDROGENASE"/>
    <property type="match status" value="1"/>
</dbReference>
<dbReference type="PANTHER" id="PTHR43491:SF1">
    <property type="entry name" value="UDP-N-ACETYL-D-MANNOSAMINE DEHYDROGENASE"/>
    <property type="match status" value="1"/>
</dbReference>
<dbReference type="Pfam" id="PF00984">
    <property type="entry name" value="UDPG_MGDP_dh"/>
    <property type="match status" value="1"/>
</dbReference>
<dbReference type="Pfam" id="PF03720">
    <property type="entry name" value="UDPG_MGDP_dh_C"/>
    <property type="match status" value="1"/>
</dbReference>
<dbReference type="Pfam" id="PF03721">
    <property type="entry name" value="UDPG_MGDP_dh_N"/>
    <property type="match status" value="1"/>
</dbReference>
<dbReference type="PIRSF" id="PIRSF500136">
    <property type="entry name" value="UDP_ManNAc_DH"/>
    <property type="match status" value="1"/>
</dbReference>
<dbReference type="PIRSF" id="PIRSF000124">
    <property type="entry name" value="UDPglc_GDPman_dh"/>
    <property type="match status" value="1"/>
</dbReference>
<dbReference type="SMART" id="SM00984">
    <property type="entry name" value="UDPG_MGDP_dh_C"/>
    <property type="match status" value="1"/>
</dbReference>
<dbReference type="SUPFAM" id="SSF48179">
    <property type="entry name" value="6-phosphogluconate dehydrogenase C-terminal domain-like"/>
    <property type="match status" value="1"/>
</dbReference>
<dbReference type="SUPFAM" id="SSF51735">
    <property type="entry name" value="NAD(P)-binding Rossmann-fold domains"/>
    <property type="match status" value="1"/>
</dbReference>
<dbReference type="SUPFAM" id="SSF52413">
    <property type="entry name" value="UDP-glucose/GDP-mannose dehydrogenase C-terminal domain"/>
    <property type="match status" value="1"/>
</dbReference>